<accession>D2Y2Q8</accession>
<organism>
    <name type="scientific">Cyriopagopus hainanus</name>
    <name type="common">Chinese bird spider</name>
    <name type="synonym">Haplopelma hainanum</name>
    <dbReference type="NCBI Taxonomy" id="209901"/>
    <lineage>
        <taxon>Eukaryota</taxon>
        <taxon>Metazoa</taxon>
        <taxon>Ecdysozoa</taxon>
        <taxon>Arthropoda</taxon>
        <taxon>Chelicerata</taxon>
        <taxon>Arachnida</taxon>
        <taxon>Araneae</taxon>
        <taxon>Mygalomorphae</taxon>
        <taxon>Theraphosidae</taxon>
        <taxon>Haplopelma</taxon>
    </lineage>
</organism>
<protein>
    <recommendedName>
        <fullName>Kunitz-type U15-theraphotoxin-Hhn1q</fullName>
        <shortName>U15-TRTX-Hhn1q</shortName>
    </recommendedName>
    <alternativeName>
        <fullName>Kunitz-type serine protease inhibitor hainantoxin-XI-17</fullName>
        <shortName>HNTX-XI-17</shortName>
    </alternativeName>
</protein>
<reference key="1">
    <citation type="journal article" date="2010" name="J. Proteome Res.">
        <title>Molecular diversification of peptide toxins from the tarantula Haplopelma hainanum (Ornithoctonus hainana) venom based on transcriptomic, peptidomic, and genomic analyses.</title>
        <authorList>
            <person name="Tang X."/>
            <person name="Zhang Y."/>
            <person name="Hu W."/>
            <person name="Xu D."/>
            <person name="Tao H."/>
            <person name="Yang X."/>
            <person name="Li Y."/>
            <person name="Jiang L."/>
            <person name="Liang S."/>
        </authorList>
    </citation>
    <scope>NUCLEOTIDE SEQUENCE [LARGE SCALE GENOMIC DNA]</scope>
    <source>
        <tissue>Venom gland</tissue>
    </source>
</reference>
<name>VKTQ1_CYRHA</name>
<sequence length="88" mass="9859">MGIARILSAVLFLSVLFVVTFPTLLSADHHDGRIDTCRLPSDRGRCKASFERWYFNGTTCTKFVYGGYGGNDNRFPTEKACMERCAKA</sequence>
<comment type="function">
    <text evidence="2">Serine protease inhibitor that inhibits trypsin at a molar ratio of 1:1.</text>
</comment>
<comment type="subcellular location">
    <subcellularLocation>
        <location evidence="6">Secreted</location>
    </subcellularLocation>
</comment>
<comment type="tissue specificity">
    <text evidence="6">Expressed by the venom gland.</text>
</comment>
<comment type="similarity">
    <text evidence="5">Belongs to the venom Kunitz-type family. 01 (intermediate) subfamily.</text>
</comment>
<feature type="signal peptide" evidence="3">
    <location>
        <begin position="1"/>
        <end position="27"/>
    </location>
</feature>
<feature type="propeptide" id="PRO_0000401010" evidence="1">
    <location>
        <begin position="28"/>
        <end position="33"/>
    </location>
</feature>
<feature type="peptide" id="PRO_0000401011" description="Kunitz-type U15-theraphotoxin-Hhn1q">
    <location>
        <begin position="34"/>
        <end position="88"/>
    </location>
</feature>
<feature type="domain" description="BPTI/Kunitz inhibitor" evidence="4">
    <location>
        <begin position="37"/>
        <end position="85"/>
    </location>
</feature>
<feature type="site" description="Reactive bond for trypsin" evidence="1">
    <location>
        <begin position="47"/>
        <end position="48"/>
    </location>
</feature>
<feature type="disulfide bond" evidence="4">
    <location>
        <begin position="37"/>
        <end position="85"/>
    </location>
</feature>
<feature type="disulfide bond" evidence="4">
    <location>
        <begin position="60"/>
        <end position="81"/>
    </location>
</feature>
<dbReference type="EMBL" id="GU293135">
    <property type="protein sequence ID" value="ADB56951.1"/>
    <property type="molecule type" value="Genomic_DNA"/>
</dbReference>
<dbReference type="SMR" id="D2Y2Q8"/>
<dbReference type="ArachnoServer" id="AS001890">
    <property type="toxin name" value="U15-theraphotoxin-Hhn1q"/>
</dbReference>
<dbReference type="GO" id="GO:0005576">
    <property type="term" value="C:extracellular region"/>
    <property type="evidence" value="ECO:0007669"/>
    <property type="project" value="UniProtKB-SubCell"/>
</dbReference>
<dbReference type="GO" id="GO:0015459">
    <property type="term" value="F:potassium channel regulator activity"/>
    <property type="evidence" value="ECO:0007669"/>
    <property type="project" value="UniProtKB-KW"/>
</dbReference>
<dbReference type="GO" id="GO:0004867">
    <property type="term" value="F:serine-type endopeptidase inhibitor activity"/>
    <property type="evidence" value="ECO:0007669"/>
    <property type="project" value="UniProtKB-KW"/>
</dbReference>
<dbReference type="GO" id="GO:0090729">
    <property type="term" value="F:toxin activity"/>
    <property type="evidence" value="ECO:0007669"/>
    <property type="project" value="UniProtKB-KW"/>
</dbReference>
<dbReference type="GO" id="GO:0044562">
    <property type="term" value="P:envenomation resulting in negative regulation of voltage-gated potassium channel activity in another organism"/>
    <property type="evidence" value="ECO:0007669"/>
    <property type="project" value="UniProtKB-ARBA"/>
</dbReference>
<dbReference type="CDD" id="cd22598">
    <property type="entry name" value="Kunitz_huwentoxin"/>
    <property type="match status" value="1"/>
</dbReference>
<dbReference type="FunFam" id="4.10.410.10:FF:000020">
    <property type="entry name" value="Collagen, type VI, alpha 3"/>
    <property type="match status" value="1"/>
</dbReference>
<dbReference type="Gene3D" id="4.10.410.10">
    <property type="entry name" value="Pancreatic trypsin inhibitor Kunitz domain"/>
    <property type="match status" value="1"/>
</dbReference>
<dbReference type="InterPro" id="IPR002223">
    <property type="entry name" value="Kunitz_BPTI"/>
</dbReference>
<dbReference type="InterPro" id="IPR036880">
    <property type="entry name" value="Kunitz_BPTI_sf"/>
</dbReference>
<dbReference type="PANTHER" id="PTHR47247">
    <property type="entry name" value="KUNITZ-TYPE PROTEASE INHIBITOR 2"/>
    <property type="match status" value="1"/>
</dbReference>
<dbReference type="PANTHER" id="PTHR47247:SF1">
    <property type="entry name" value="KUNITZ-TYPE PROTEASE INHIBITOR 2"/>
    <property type="match status" value="1"/>
</dbReference>
<dbReference type="Pfam" id="PF00014">
    <property type="entry name" value="Kunitz_BPTI"/>
    <property type="match status" value="1"/>
</dbReference>
<dbReference type="PRINTS" id="PR00759">
    <property type="entry name" value="BASICPTASE"/>
</dbReference>
<dbReference type="SMART" id="SM00131">
    <property type="entry name" value="KU"/>
    <property type="match status" value="1"/>
</dbReference>
<dbReference type="SUPFAM" id="SSF57362">
    <property type="entry name" value="BPTI-like"/>
    <property type="match status" value="1"/>
</dbReference>
<dbReference type="PROSITE" id="PS50279">
    <property type="entry name" value="BPTI_KUNITZ_2"/>
    <property type="match status" value="1"/>
</dbReference>
<keyword id="KW-1015">Disulfide bond</keyword>
<keyword id="KW-0646">Protease inhibitor</keyword>
<keyword id="KW-0964">Secreted</keyword>
<keyword id="KW-0722">Serine protease inhibitor</keyword>
<keyword id="KW-0732">Signal</keyword>
<proteinExistence type="inferred from homology"/>
<evidence type="ECO:0000250" key="1"/>
<evidence type="ECO:0000250" key="2">
    <source>
        <dbReference type="UniProtKB" id="P68425"/>
    </source>
</evidence>
<evidence type="ECO:0000255" key="3"/>
<evidence type="ECO:0000255" key="4">
    <source>
        <dbReference type="PROSITE-ProRule" id="PRU00031"/>
    </source>
</evidence>
<evidence type="ECO:0000305" key="5"/>
<evidence type="ECO:0000305" key="6">
    <source>
    </source>
</evidence>